<keyword id="KW-0963">Cytoplasm</keyword>
<keyword id="KW-0489">Methyltransferase</keyword>
<keyword id="KW-1185">Reference proteome</keyword>
<keyword id="KW-0949">S-adenosyl-L-methionine</keyword>
<keyword id="KW-0808">Transferase</keyword>
<name>TAM_BRUC2</name>
<protein>
    <recommendedName>
        <fullName evidence="1">Trans-aconitate 2-methyltransferase</fullName>
        <ecNumber evidence="1">2.1.1.144</ecNumber>
    </recommendedName>
</protein>
<accession>A9M6C1</accession>
<organism>
    <name type="scientific">Brucella canis (strain ATCC 23365 / NCTC 10854 / RM-666)</name>
    <dbReference type="NCBI Taxonomy" id="483179"/>
    <lineage>
        <taxon>Bacteria</taxon>
        <taxon>Pseudomonadati</taxon>
        <taxon>Pseudomonadota</taxon>
        <taxon>Alphaproteobacteria</taxon>
        <taxon>Hyphomicrobiales</taxon>
        <taxon>Brucellaceae</taxon>
        <taxon>Brucella/Ochrobactrum group</taxon>
        <taxon>Brucella</taxon>
    </lineage>
</organism>
<reference key="1">
    <citation type="submission" date="2007-10" db="EMBL/GenBank/DDBJ databases">
        <title>Brucella canis ATCC 23365 whole genome shotgun sequencing project.</title>
        <authorList>
            <person name="Setubal J.C."/>
            <person name="Bowns C."/>
            <person name="Boyle S."/>
            <person name="Crasta O.R."/>
            <person name="Czar M.J."/>
            <person name="Dharmanolla C."/>
            <person name="Gillespie J.J."/>
            <person name="Kenyon R.W."/>
            <person name="Lu J."/>
            <person name="Mane S."/>
            <person name="Mohapatra S."/>
            <person name="Nagrani S."/>
            <person name="Purkayastha A."/>
            <person name="Rajasimha H.K."/>
            <person name="Shallom J.M."/>
            <person name="Shallom S."/>
            <person name="Shukla M."/>
            <person name="Snyder E.E."/>
            <person name="Sobral B.W."/>
            <person name="Wattam A.R."/>
            <person name="Will R."/>
            <person name="Williams K."/>
            <person name="Yoo H."/>
            <person name="Bruce D."/>
            <person name="Detter C."/>
            <person name="Munk C."/>
            <person name="Brettin T.S."/>
        </authorList>
    </citation>
    <scope>NUCLEOTIDE SEQUENCE [LARGE SCALE GENOMIC DNA]</scope>
    <source>
        <strain>ATCC 23365 / NCTC 10854 / RM-666</strain>
    </source>
</reference>
<gene>
    <name evidence="1" type="primary">tam</name>
    <name type="ordered locus">BCAN_A1490</name>
</gene>
<comment type="function">
    <text evidence="1">Catalyzes the S-adenosylmethionine monomethyl esterification of trans-aconitate.</text>
</comment>
<comment type="catalytic activity">
    <reaction evidence="1">
        <text>trans-aconitate + S-adenosyl-L-methionine = (E)-3-(methoxycarbonyl)pent-2-enedioate + S-adenosyl-L-homocysteine</text>
        <dbReference type="Rhea" id="RHEA:14969"/>
        <dbReference type="ChEBI" id="CHEBI:15708"/>
        <dbReference type="ChEBI" id="CHEBI:57470"/>
        <dbReference type="ChEBI" id="CHEBI:57856"/>
        <dbReference type="ChEBI" id="CHEBI:59789"/>
        <dbReference type="EC" id="2.1.1.144"/>
    </reaction>
</comment>
<comment type="subcellular location">
    <subcellularLocation>
        <location evidence="1">Cytoplasm</location>
    </subcellularLocation>
</comment>
<comment type="similarity">
    <text evidence="1">Belongs to the methyltransferase superfamily. Tam family.</text>
</comment>
<proteinExistence type="inferred from homology"/>
<evidence type="ECO:0000255" key="1">
    <source>
        <dbReference type="HAMAP-Rule" id="MF_00560"/>
    </source>
</evidence>
<sequence>MKDWSAKQYLKFEDERSRPARDLLAQIPLSAPRKVVDIGCGPGNSTKLLVERWPDAQISGFDTSPDMIDTAKTHLPDVEFFISDAASFEPDAETDVLFSNAVFQWLPDHVEQLQRLLSLLQPGAFLAVQMPDNMGEQTHVGMRDVAKTAPFAMKIATKGRAALPPVATYYNAFADDAARIDIWHTIYNHPLAGVDAIVEWVKGTGLRPFLDPLDEQEQADYLKAYKARIAEHYPMTADGKVLLRFPRIFLVVQKK</sequence>
<dbReference type="EC" id="2.1.1.144" evidence="1"/>
<dbReference type="EMBL" id="CP000872">
    <property type="protein sequence ID" value="ABX62517.1"/>
    <property type="molecule type" value="Genomic_DNA"/>
</dbReference>
<dbReference type="RefSeq" id="WP_004691577.1">
    <property type="nucleotide sequence ID" value="NC_010103.1"/>
</dbReference>
<dbReference type="SMR" id="A9M6C1"/>
<dbReference type="GeneID" id="55591104"/>
<dbReference type="KEGG" id="bcs:BCAN_A1490"/>
<dbReference type="HOGENOM" id="CLU_037990_5_2_5"/>
<dbReference type="Proteomes" id="UP000001385">
    <property type="component" value="Chromosome I"/>
</dbReference>
<dbReference type="GO" id="GO:0005737">
    <property type="term" value="C:cytoplasm"/>
    <property type="evidence" value="ECO:0007669"/>
    <property type="project" value="UniProtKB-SubCell"/>
</dbReference>
<dbReference type="GO" id="GO:0030798">
    <property type="term" value="F:trans-aconitate 2-methyltransferase activity"/>
    <property type="evidence" value="ECO:0007669"/>
    <property type="project" value="UniProtKB-UniRule"/>
</dbReference>
<dbReference type="GO" id="GO:0032259">
    <property type="term" value="P:methylation"/>
    <property type="evidence" value="ECO:0007669"/>
    <property type="project" value="UniProtKB-KW"/>
</dbReference>
<dbReference type="CDD" id="cd02440">
    <property type="entry name" value="AdoMet_MTases"/>
    <property type="match status" value="1"/>
</dbReference>
<dbReference type="Gene3D" id="1.10.150.290">
    <property type="entry name" value="S-adenosyl-L-methionine-dependent methyltransferases"/>
    <property type="match status" value="1"/>
</dbReference>
<dbReference type="Gene3D" id="3.40.50.150">
    <property type="entry name" value="Vaccinia Virus protein VP39"/>
    <property type="match status" value="1"/>
</dbReference>
<dbReference type="HAMAP" id="MF_00560">
    <property type="entry name" value="Tran_acon_Me_trans"/>
    <property type="match status" value="1"/>
</dbReference>
<dbReference type="InterPro" id="IPR041698">
    <property type="entry name" value="Methyltransf_25"/>
</dbReference>
<dbReference type="InterPro" id="IPR029063">
    <property type="entry name" value="SAM-dependent_MTases_sf"/>
</dbReference>
<dbReference type="InterPro" id="IPR023506">
    <property type="entry name" value="Trans-aconitate_MeTrfase"/>
</dbReference>
<dbReference type="InterPro" id="IPR023149">
    <property type="entry name" value="Trans_acon_MeTrfase_C"/>
</dbReference>
<dbReference type="NCBIfam" id="NF002463">
    <property type="entry name" value="PRK01683.1"/>
    <property type="match status" value="1"/>
</dbReference>
<dbReference type="PANTHER" id="PTHR43861:SF1">
    <property type="entry name" value="TRANS-ACONITATE 2-METHYLTRANSFERASE"/>
    <property type="match status" value="1"/>
</dbReference>
<dbReference type="PANTHER" id="PTHR43861">
    <property type="entry name" value="TRANS-ACONITATE 2-METHYLTRANSFERASE-RELATED"/>
    <property type="match status" value="1"/>
</dbReference>
<dbReference type="Pfam" id="PF13649">
    <property type="entry name" value="Methyltransf_25"/>
    <property type="match status" value="1"/>
</dbReference>
<dbReference type="SUPFAM" id="SSF53335">
    <property type="entry name" value="S-adenosyl-L-methionine-dependent methyltransferases"/>
    <property type="match status" value="1"/>
</dbReference>
<feature type="chain" id="PRO_1000082271" description="Trans-aconitate 2-methyltransferase">
    <location>
        <begin position="1"/>
        <end position="255"/>
    </location>
</feature>